<comment type="function">
    <text evidence="1">The RecF protein is involved in DNA metabolism; it is required for DNA replication and normal SOS inducibility. RecF binds preferentially to single-stranded, linear DNA. It also seems to bind ATP.</text>
</comment>
<comment type="subcellular location">
    <subcellularLocation>
        <location evidence="1">Cytoplasm</location>
    </subcellularLocation>
</comment>
<comment type="similarity">
    <text evidence="1">Belongs to the RecF family.</text>
</comment>
<protein>
    <recommendedName>
        <fullName evidence="1">DNA replication and repair protein RecF</fullName>
    </recommendedName>
</protein>
<name>RECF_ECOLC</name>
<accession>B1IYP4</accession>
<feature type="chain" id="PRO_1000079586" description="DNA replication and repair protein RecF">
    <location>
        <begin position="1"/>
        <end position="357"/>
    </location>
</feature>
<feature type="binding site" evidence="1">
    <location>
        <begin position="30"/>
        <end position="37"/>
    </location>
    <ligand>
        <name>ATP</name>
        <dbReference type="ChEBI" id="CHEBI:30616"/>
    </ligand>
</feature>
<gene>
    <name evidence="1" type="primary">recF</name>
    <name type="ordered locus">EcolC_0003</name>
</gene>
<reference key="1">
    <citation type="submission" date="2008-02" db="EMBL/GenBank/DDBJ databases">
        <title>Complete sequence of Escherichia coli C str. ATCC 8739.</title>
        <authorList>
            <person name="Copeland A."/>
            <person name="Lucas S."/>
            <person name="Lapidus A."/>
            <person name="Glavina del Rio T."/>
            <person name="Dalin E."/>
            <person name="Tice H."/>
            <person name="Bruce D."/>
            <person name="Goodwin L."/>
            <person name="Pitluck S."/>
            <person name="Kiss H."/>
            <person name="Brettin T."/>
            <person name="Detter J.C."/>
            <person name="Han C."/>
            <person name="Kuske C.R."/>
            <person name="Schmutz J."/>
            <person name="Larimer F."/>
            <person name="Land M."/>
            <person name="Hauser L."/>
            <person name="Kyrpides N."/>
            <person name="Mikhailova N."/>
            <person name="Ingram L."/>
            <person name="Richardson P."/>
        </authorList>
    </citation>
    <scope>NUCLEOTIDE SEQUENCE [LARGE SCALE GENOMIC DNA]</scope>
    <source>
        <strain>ATCC 8739 / DSM 1576 / NBRC 3972 / NCIMB 8545 / WDCM 00012 / Crooks</strain>
    </source>
</reference>
<proteinExistence type="inferred from homology"/>
<sequence length="357" mass="40514">MSLTRLLIRDFRNIETADLALSPGFNFLVGANGSGKTSVLEAIYTLGHGRAFRSLQIGRVIRHEQEAFVLHGRLQGEERETAIGLTKDKQGDSKVRIDGTDGHKVAELAHLMPMQLITPEGFTLLNGGPKYRRAFLDWGCFHNEPGFFTAWSNLKRLLKQRNAALRQVTRYEQLRPWDKELIPLAEQISTWRAEYSAGIAADMADTCKQFLPEFSLTFSFQRGWEKETEYAEVLERNFERDRQLTYTAHGPHKADLRIRADGAPVEDTLSRGQLKLLMCALRLAQGEFLTRESGRRCLYLIDDFASELDDERRGLLASRLKATQSQVFVSAISAEHVIDMSDENSKMFTVEKGKITD</sequence>
<keyword id="KW-0067">ATP-binding</keyword>
<keyword id="KW-0963">Cytoplasm</keyword>
<keyword id="KW-0227">DNA damage</keyword>
<keyword id="KW-0234">DNA repair</keyword>
<keyword id="KW-0235">DNA replication</keyword>
<keyword id="KW-0238">DNA-binding</keyword>
<keyword id="KW-0547">Nucleotide-binding</keyword>
<keyword id="KW-0742">SOS response</keyword>
<organism>
    <name type="scientific">Escherichia coli (strain ATCC 8739 / DSM 1576 / NBRC 3972 / NCIMB 8545 / WDCM 00012 / Crooks)</name>
    <dbReference type="NCBI Taxonomy" id="481805"/>
    <lineage>
        <taxon>Bacteria</taxon>
        <taxon>Pseudomonadati</taxon>
        <taxon>Pseudomonadota</taxon>
        <taxon>Gammaproteobacteria</taxon>
        <taxon>Enterobacterales</taxon>
        <taxon>Enterobacteriaceae</taxon>
        <taxon>Escherichia</taxon>
    </lineage>
</organism>
<evidence type="ECO:0000255" key="1">
    <source>
        <dbReference type="HAMAP-Rule" id="MF_00365"/>
    </source>
</evidence>
<dbReference type="EMBL" id="CP000946">
    <property type="protein sequence ID" value="ACA75691.1"/>
    <property type="molecule type" value="Genomic_DNA"/>
</dbReference>
<dbReference type="RefSeq" id="WP_000060112.1">
    <property type="nucleotide sequence ID" value="NZ_MTFT01000013.1"/>
</dbReference>
<dbReference type="SMR" id="B1IYP4"/>
<dbReference type="GeneID" id="93778441"/>
<dbReference type="KEGG" id="ecl:EcolC_0003"/>
<dbReference type="HOGENOM" id="CLU_040267_0_0_6"/>
<dbReference type="GO" id="GO:0005737">
    <property type="term" value="C:cytoplasm"/>
    <property type="evidence" value="ECO:0007669"/>
    <property type="project" value="UniProtKB-SubCell"/>
</dbReference>
<dbReference type="GO" id="GO:0005524">
    <property type="term" value="F:ATP binding"/>
    <property type="evidence" value="ECO:0007669"/>
    <property type="project" value="UniProtKB-UniRule"/>
</dbReference>
<dbReference type="GO" id="GO:0003697">
    <property type="term" value="F:single-stranded DNA binding"/>
    <property type="evidence" value="ECO:0007669"/>
    <property type="project" value="UniProtKB-UniRule"/>
</dbReference>
<dbReference type="GO" id="GO:0006260">
    <property type="term" value="P:DNA replication"/>
    <property type="evidence" value="ECO:0007669"/>
    <property type="project" value="UniProtKB-UniRule"/>
</dbReference>
<dbReference type="GO" id="GO:0000731">
    <property type="term" value="P:DNA synthesis involved in DNA repair"/>
    <property type="evidence" value="ECO:0007669"/>
    <property type="project" value="TreeGrafter"/>
</dbReference>
<dbReference type="GO" id="GO:0006302">
    <property type="term" value="P:double-strand break repair"/>
    <property type="evidence" value="ECO:0007669"/>
    <property type="project" value="TreeGrafter"/>
</dbReference>
<dbReference type="GO" id="GO:0009432">
    <property type="term" value="P:SOS response"/>
    <property type="evidence" value="ECO:0007669"/>
    <property type="project" value="UniProtKB-UniRule"/>
</dbReference>
<dbReference type="FunFam" id="1.20.1050.90:FF:000001">
    <property type="entry name" value="DNA replication and repair protein RecF"/>
    <property type="match status" value="1"/>
</dbReference>
<dbReference type="Gene3D" id="3.40.50.300">
    <property type="entry name" value="P-loop containing nucleotide triphosphate hydrolases"/>
    <property type="match status" value="1"/>
</dbReference>
<dbReference type="Gene3D" id="1.20.1050.90">
    <property type="entry name" value="RecF/RecN/SMC, N-terminal domain"/>
    <property type="match status" value="1"/>
</dbReference>
<dbReference type="HAMAP" id="MF_00365">
    <property type="entry name" value="RecF"/>
    <property type="match status" value="1"/>
</dbReference>
<dbReference type="InterPro" id="IPR001238">
    <property type="entry name" value="DNA-binding_RecF"/>
</dbReference>
<dbReference type="InterPro" id="IPR018078">
    <property type="entry name" value="DNA-binding_RecF_CS"/>
</dbReference>
<dbReference type="InterPro" id="IPR027417">
    <property type="entry name" value="P-loop_NTPase"/>
</dbReference>
<dbReference type="InterPro" id="IPR003395">
    <property type="entry name" value="RecF/RecN/SMC_N"/>
</dbReference>
<dbReference type="InterPro" id="IPR042174">
    <property type="entry name" value="RecF_2"/>
</dbReference>
<dbReference type="NCBIfam" id="TIGR00611">
    <property type="entry name" value="recf"/>
    <property type="match status" value="1"/>
</dbReference>
<dbReference type="PANTHER" id="PTHR32182">
    <property type="entry name" value="DNA REPLICATION AND REPAIR PROTEIN RECF"/>
    <property type="match status" value="1"/>
</dbReference>
<dbReference type="PANTHER" id="PTHR32182:SF0">
    <property type="entry name" value="DNA REPLICATION AND REPAIR PROTEIN RECF"/>
    <property type="match status" value="1"/>
</dbReference>
<dbReference type="Pfam" id="PF02463">
    <property type="entry name" value="SMC_N"/>
    <property type="match status" value="1"/>
</dbReference>
<dbReference type="SUPFAM" id="SSF52540">
    <property type="entry name" value="P-loop containing nucleoside triphosphate hydrolases"/>
    <property type="match status" value="1"/>
</dbReference>
<dbReference type="PROSITE" id="PS00617">
    <property type="entry name" value="RECF_1"/>
    <property type="match status" value="1"/>
</dbReference>
<dbReference type="PROSITE" id="PS00618">
    <property type="entry name" value="RECF_2"/>
    <property type="match status" value="1"/>
</dbReference>